<gene>
    <name evidence="1" type="primary">hemE</name>
    <name type="ordered locus">Shew185_3920</name>
</gene>
<keyword id="KW-0963">Cytoplasm</keyword>
<keyword id="KW-0210">Decarboxylase</keyword>
<keyword id="KW-0456">Lyase</keyword>
<keyword id="KW-0627">Porphyrin biosynthesis</keyword>
<protein>
    <recommendedName>
        <fullName evidence="1">Uroporphyrinogen decarboxylase</fullName>
        <shortName evidence="1">UPD</shortName>
        <shortName evidence="1">URO-D</shortName>
        <ecNumber evidence="1">4.1.1.37</ecNumber>
    </recommendedName>
</protein>
<organism>
    <name type="scientific">Shewanella baltica (strain OS185)</name>
    <dbReference type="NCBI Taxonomy" id="402882"/>
    <lineage>
        <taxon>Bacteria</taxon>
        <taxon>Pseudomonadati</taxon>
        <taxon>Pseudomonadota</taxon>
        <taxon>Gammaproteobacteria</taxon>
        <taxon>Alteromonadales</taxon>
        <taxon>Shewanellaceae</taxon>
        <taxon>Shewanella</taxon>
    </lineage>
</organism>
<reference key="1">
    <citation type="submission" date="2007-07" db="EMBL/GenBank/DDBJ databases">
        <title>Complete sequence of chromosome of Shewanella baltica OS185.</title>
        <authorList>
            <consortium name="US DOE Joint Genome Institute"/>
            <person name="Copeland A."/>
            <person name="Lucas S."/>
            <person name="Lapidus A."/>
            <person name="Barry K."/>
            <person name="Glavina del Rio T."/>
            <person name="Dalin E."/>
            <person name="Tice H."/>
            <person name="Pitluck S."/>
            <person name="Sims D."/>
            <person name="Brettin T."/>
            <person name="Bruce D."/>
            <person name="Detter J.C."/>
            <person name="Han C."/>
            <person name="Schmutz J."/>
            <person name="Larimer F."/>
            <person name="Land M."/>
            <person name="Hauser L."/>
            <person name="Kyrpides N."/>
            <person name="Mikhailova N."/>
            <person name="Brettar I."/>
            <person name="Rodrigues J."/>
            <person name="Konstantinidis K."/>
            <person name="Tiedje J."/>
            <person name="Richardson P."/>
        </authorList>
    </citation>
    <scope>NUCLEOTIDE SEQUENCE [LARGE SCALE GENOMIC DNA]</scope>
    <source>
        <strain>OS185</strain>
    </source>
</reference>
<accession>A6WTA5</accession>
<feature type="chain" id="PRO_1000023968" description="Uroporphyrinogen decarboxylase">
    <location>
        <begin position="1"/>
        <end position="354"/>
    </location>
</feature>
<feature type="binding site" evidence="1">
    <location>
        <begin position="27"/>
        <end position="31"/>
    </location>
    <ligand>
        <name>substrate</name>
    </ligand>
</feature>
<feature type="binding site" evidence="1">
    <location>
        <position position="77"/>
    </location>
    <ligand>
        <name>substrate</name>
    </ligand>
</feature>
<feature type="binding site" evidence="1">
    <location>
        <position position="154"/>
    </location>
    <ligand>
        <name>substrate</name>
    </ligand>
</feature>
<feature type="binding site" evidence="1">
    <location>
        <position position="209"/>
    </location>
    <ligand>
        <name>substrate</name>
    </ligand>
</feature>
<feature type="binding site" evidence="1">
    <location>
        <position position="327"/>
    </location>
    <ligand>
        <name>substrate</name>
    </ligand>
</feature>
<feature type="site" description="Transition state stabilizer" evidence="1">
    <location>
        <position position="77"/>
    </location>
</feature>
<sequence>MAELKNDRYLRALLKEPVDVTPVWMMRQAGRYLPEYKATRAQAGDFMSLCKNHELACEVTLQPLRRYDLDAAILFSDILTVPDAMGLGLYFEAGEGPRFERPTDTIDAIKKLSIPDPEDELGYVMKAVSTIRRELNGAVPLIGFSGSPWTLATYMVEGGSSKTFEKIKKMAYAEPMALHMLLDKLADSVILYLNAQVANGAQSLMIFDSWGGALSHSAYREFSLHYMQKIIDGLTRFADGRKVPVTLFTKGGGLWLEAMAETGCDALGLDWTVDIADARRRVGHKVALQGNMDPSMLYAPIPRIEEEVGHILAGYGEGTGHVFNLGHGIHQHVDPEHAGAFIKAVHAQSKQYHK</sequence>
<evidence type="ECO:0000255" key="1">
    <source>
        <dbReference type="HAMAP-Rule" id="MF_00218"/>
    </source>
</evidence>
<name>DCUP_SHEB8</name>
<proteinExistence type="inferred from homology"/>
<dbReference type="EC" id="4.1.1.37" evidence="1"/>
<dbReference type="EMBL" id="CP000753">
    <property type="protein sequence ID" value="ABS10044.1"/>
    <property type="molecule type" value="Genomic_DNA"/>
</dbReference>
<dbReference type="RefSeq" id="WP_012090369.1">
    <property type="nucleotide sequence ID" value="NC_009665.1"/>
</dbReference>
<dbReference type="SMR" id="A6WTA5"/>
<dbReference type="KEGG" id="sbm:Shew185_3920"/>
<dbReference type="HOGENOM" id="CLU_040933_0_0_6"/>
<dbReference type="UniPathway" id="UPA00251">
    <property type="reaction ID" value="UER00321"/>
</dbReference>
<dbReference type="GO" id="GO:0005829">
    <property type="term" value="C:cytosol"/>
    <property type="evidence" value="ECO:0007669"/>
    <property type="project" value="TreeGrafter"/>
</dbReference>
<dbReference type="GO" id="GO:0004853">
    <property type="term" value="F:uroporphyrinogen decarboxylase activity"/>
    <property type="evidence" value="ECO:0007669"/>
    <property type="project" value="UniProtKB-UniRule"/>
</dbReference>
<dbReference type="GO" id="GO:0019353">
    <property type="term" value="P:protoporphyrinogen IX biosynthetic process from glutamate"/>
    <property type="evidence" value="ECO:0007669"/>
    <property type="project" value="TreeGrafter"/>
</dbReference>
<dbReference type="CDD" id="cd00717">
    <property type="entry name" value="URO-D"/>
    <property type="match status" value="1"/>
</dbReference>
<dbReference type="FunFam" id="3.20.20.210:FF:000001">
    <property type="entry name" value="Uroporphyrinogen decarboxylase"/>
    <property type="match status" value="1"/>
</dbReference>
<dbReference type="Gene3D" id="3.20.20.210">
    <property type="match status" value="1"/>
</dbReference>
<dbReference type="HAMAP" id="MF_00218">
    <property type="entry name" value="URO_D"/>
    <property type="match status" value="1"/>
</dbReference>
<dbReference type="InterPro" id="IPR038071">
    <property type="entry name" value="UROD/MetE-like_sf"/>
</dbReference>
<dbReference type="InterPro" id="IPR006361">
    <property type="entry name" value="Uroporphyrinogen_deCO2ase_HemE"/>
</dbReference>
<dbReference type="InterPro" id="IPR000257">
    <property type="entry name" value="Uroporphyrinogen_deCOase"/>
</dbReference>
<dbReference type="NCBIfam" id="TIGR01464">
    <property type="entry name" value="hemE"/>
    <property type="match status" value="1"/>
</dbReference>
<dbReference type="PANTHER" id="PTHR21091">
    <property type="entry name" value="METHYLTETRAHYDROFOLATE:HOMOCYSTEINE METHYLTRANSFERASE RELATED"/>
    <property type="match status" value="1"/>
</dbReference>
<dbReference type="PANTHER" id="PTHR21091:SF169">
    <property type="entry name" value="UROPORPHYRINOGEN DECARBOXYLASE"/>
    <property type="match status" value="1"/>
</dbReference>
<dbReference type="Pfam" id="PF01208">
    <property type="entry name" value="URO-D"/>
    <property type="match status" value="1"/>
</dbReference>
<dbReference type="SUPFAM" id="SSF51726">
    <property type="entry name" value="UROD/MetE-like"/>
    <property type="match status" value="1"/>
</dbReference>
<dbReference type="PROSITE" id="PS00906">
    <property type="entry name" value="UROD_1"/>
    <property type="match status" value="1"/>
</dbReference>
<dbReference type="PROSITE" id="PS00907">
    <property type="entry name" value="UROD_2"/>
    <property type="match status" value="1"/>
</dbReference>
<comment type="function">
    <text evidence="1">Catalyzes the decarboxylation of four acetate groups of uroporphyrinogen-III to yield coproporphyrinogen-III.</text>
</comment>
<comment type="catalytic activity">
    <reaction evidence="1">
        <text>uroporphyrinogen III + 4 H(+) = coproporphyrinogen III + 4 CO2</text>
        <dbReference type="Rhea" id="RHEA:19865"/>
        <dbReference type="ChEBI" id="CHEBI:15378"/>
        <dbReference type="ChEBI" id="CHEBI:16526"/>
        <dbReference type="ChEBI" id="CHEBI:57308"/>
        <dbReference type="ChEBI" id="CHEBI:57309"/>
        <dbReference type="EC" id="4.1.1.37"/>
    </reaction>
</comment>
<comment type="pathway">
    <text evidence="1">Porphyrin-containing compound metabolism; protoporphyrin-IX biosynthesis; coproporphyrinogen-III from 5-aminolevulinate: step 4/4.</text>
</comment>
<comment type="subunit">
    <text evidence="1">Homodimer.</text>
</comment>
<comment type="subcellular location">
    <subcellularLocation>
        <location evidence="1">Cytoplasm</location>
    </subcellularLocation>
</comment>
<comment type="similarity">
    <text evidence="1">Belongs to the uroporphyrinogen decarboxylase family.</text>
</comment>